<name>RS12_BACP2</name>
<keyword id="KW-0488">Methylation</keyword>
<keyword id="KW-0687">Ribonucleoprotein</keyword>
<keyword id="KW-0689">Ribosomal protein</keyword>
<keyword id="KW-0694">RNA-binding</keyword>
<keyword id="KW-0699">rRNA-binding</keyword>
<keyword id="KW-0820">tRNA-binding</keyword>
<feature type="chain" id="PRO_1000060812" description="Small ribosomal subunit protein uS12">
    <location>
        <begin position="1"/>
        <end position="139"/>
    </location>
</feature>
<feature type="modified residue" description="3-methylthioaspartic acid" evidence="1">
    <location>
        <position position="102"/>
    </location>
</feature>
<reference key="1">
    <citation type="journal article" date="2007" name="PLoS ONE">
        <title>Paradoxical DNA repair and peroxide resistance gene conservation in Bacillus pumilus SAFR-032.</title>
        <authorList>
            <person name="Gioia J."/>
            <person name="Yerrapragada S."/>
            <person name="Qin X."/>
            <person name="Jiang H."/>
            <person name="Igboeli O.C."/>
            <person name="Muzny D."/>
            <person name="Dugan-Rocha S."/>
            <person name="Ding Y."/>
            <person name="Hawes A."/>
            <person name="Liu W."/>
            <person name="Perez L."/>
            <person name="Kovar C."/>
            <person name="Dinh H."/>
            <person name="Lee S."/>
            <person name="Nazareth L."/>
            <person name="Blyth P."/>
            <person name="Holder M."/>
            <person name="Buhay C."/>
            <person name="Tirumalai M.R."/>
            <person name="Liu Y."/>
            <person name="Dasgupta I."/>
            <person name="Bokhetache L."/>
            <person name="Fujita M."/>
            <person name="Karouia F."/>
            <person name="Eswara Moorthy P."/>
            <person name="Siefert J."/>
            <person name="Uzman A."/>
            <person name="Buzumbo P."/>
            <person name="Verma A."/>
            <person name="Zwiya H."/>
            <person name="McWilliams B.D."/>
            <person name="Olowu A."/>
            <person name="Clinkenbeard K.D."/>
            <person name="Newcombe D."/>
            <person name="Golebiewski L."/>
            <person name="Petrosino J.F."/>
            <person name="Nicholson W.L."/>
            <person name="Fox G.E."/>
            <person name="Venkateswaran K."/>
            <person name="Highlander S.K."/>
            <person name="Weinstock G.M."/>
        </authorList>
    </citation>
    <scope>NUCLEOTIDE SEQUENCE [LARGE SCALE GENOMIC DNA]</scope>
    <source>
        <strain>SAFR-032</strain>
    </source>
</reference>
<gene>
    <name evidence="2" type="primary">rpsL</name>
    <name type="ordered locus">BPUM_0096</name>
</gene>
<accession>A8F979</accession>
<organism>
    <name type="scientific">Bacillus pumilus (strain SAFR-032)</name>
    <dbReference type="NCBI Taxonomy" id="315750"/>
    <lineage>
        <taxon>Bacteria</taxon>
        <taxon>Bacillati</taxon>
        <taxon>Bacillota</taxon>
        <taxon>Bacilli</taxon>
        <taxon>Bacillales</taxon>
        <taxon>Bacillaceae</taxon>
        <taxon>Bacillus</taxon>
    </lineage>
</organism>
<sequence length="139" mass="15433">MPTINQLIRKGRVSKVENSKSPALNKGYNSFKKEHTNVTSPQKRGVCTRVGTMTPKKPNSALRKYARVRLSNLIEVTAYIPGIGHNLQEHSVVLIRGGRVKDLPGVRYHIVRGALDTAGVDGRMQGRSKYGTKRPKQSK</sequence>
<proteinExistence type="inferred from homology"/>
<evidence type="ECO:0000250" key="1"/>
<evidence type="ECO:0000255" key="2">
    <source>
        <dbReference type="HAMAP-Rule" id="MF_00403"/>
    </source>
</evidence>
<evidence type="ECO:0000305" key="3"/>
<protein>
    <recommendedName>
        <fullName evidence="2">Small ribosomal subunit protein uS12</fullName>
    </recommendedName>
    <alternativeName>
        <fullName evidence="3">30S ribosomal protein S12</fullName>
    </alternativeName>
</protein>
<dbReference type="EMBL" id="CP000813">
    <property type="protein sequence ID" value="ABV60796.1"/>
    <property type="molecule type" value="Genomic_DNA"/>
</dbReference>
<dbReference type="RefSeq" id="WP_003216962.1">
    <property type="nucleotide sequence ID" value="NZ_VEIS01000020.1"/>
</dbReference>
<dbReference type="SMR" id="A8F979"/>
<dbReference type="STRING" id="315750.BPUM_0096"/>
<dbReference type="GeneID" id="66361727"/>
<dbReference type="KEGG" id="bpu:BPUM_0096"/>
<dbReference type="eggNOG" id="COG0048">
    <property type="taxonomic scope" value="Bacteria"/>
</dbReference>
<dbReference type="HOGENOM" id="CLU_104295_1_2_9"/>
<dbReference type="OrthoDB" id="9802366at2"/>
<dbReference type="Proteomes" id="UP000001355">
    <property type="component" value="Chromosome"/>
</dbReference>
<dbReference type="GO" id="GO:0015935">
    <property type="term" value="C:small ribosomal subunit"/>
    <property type="evidence" value="ECO:0007669"/>
    <property type="project" value="InterPro"/>
</dbReference>
<dbReference type="GO" id="GO:0019843">
    <property type="term" value="F:rRNA binding"/>
    <property type="evidence" value="ECO:0007669"/>
    <property type="project" value="UniProtKB-UniRule"/>
</dbReference>
<dbReference type="GO" id="GO:0003735">
    <property type="term" value="F:structural constituent of ribosome"/>
    <property type="evidence" value="ECO:0007669"/>
    <property type="project" value="InterPro"/>
</dbReference>
<dbReference type="GO" id="GO:0000049">
    <property type="term" value="F:tRNA binding"/>
    <property type="evidence" value="ECO:0007669"/>
    <property type="project" value="UniProtKB-UniRule"/>
</dbReference>
<dbReference type="GO" id="GO:0006412">
    <property type="term" value="P:translation"/>
    <property type="evidence" value="ECO:0007669"/>
    <property type="project" value="UniProtKB-UniRule"/>
</dbReference>
<dbReference type="CDD" id="cd03368">
    <property type="entry name" value="Ribosomal_S12"/>
    <property type="match status" value="1"/>
</dbReference>
<dbReference type="FunFam" id="2.40.50.140:FF:000001">
    <property type="entry name" value="30S ribosomal protein S12"/>
    <property type="match status" value="1"/>
</dbReference>
<dbReference type="Gene3D" id="2.40.50.140">
    <property type="entry name" value="Nucleic acid-binding proteins"/>
    <property type="match status" value="1"/>
</dbReference>
<dbReference type="HAMAP" id="MF_00403_B">
    <property type="entry name" value="Ribosomal_uS12_B"/>
    <property type="match status" value="1"/>
</dbReference>
<dbReference type="InterPro" id="IPR012340">
    <property type="entry name" value="NA-bd_OB-fold"/>
</dbReference>
<dbReference type="InterPro" id="IPR006032">
    <property type="entry name" value="Ribosomal_uS12"/>
</dbReference>
<dbReference type="InterPro" id="IPR005679">
    <property type="entry name" value="Ribosomal_uS12_bac"/>
</dbReference>
<dbReference type="NCBIfam" id="TIGR00981">
    <property type="entry name" value="rpsL_bact"/>
    <property type="match status" value="1"/>
</dbReference>
<dbReference type="PANTHER" id="PTHR11652">
    <property type="entry name" value="30S RIBOSOMAL PROTEIN S12 FAMILY MEMBER"/>
    <property type="match status" value="1"/>
</dbReference>
<dbReference type="Pfam" id="PF00164">
    <property type="entry name" value="Ribosom_S12_S23"/>
    <property type="match status" value="1"/>
</dbReference>
<dbReference type="PRINTS" id="PR01034">
    <property type="entry name" value="RIBOSOMALS12"/>
</dbReference>
<dbReference type="SUPFAM" id="SSF50249">
    <property type="entry name" value="Nucleic acid-binding proteins"/>
    <property type="match status" value="1"/>
</dbReference>
<dbReference type="PROSITE" id="PS00055">
    <property type="entry name" value="RIBOSOMAL_S12"/>
    <property type="match status" value="1"/>
</dbReference>
<comment type="function">
    <text evidence="2">With S4 and S5 plays an important role in translational accuracy.</text>
</comment>
<comment type="function">
    <text evidence="2">Interacts with and stabilizes bases of the 16S rRNA that are involved in tRNA selection in the A site and with the mRNA backbone. Located at the interface of the 30S and 50S subunits, it traverses the body of the 30S subunit contacting proteins on the other side and probably holding the rRNA structure together. The combined cluster of proteins S8, S12 and S17 appears to hold together the shoulder and platform of the 30S subunit.</text>
</comment>
<comment type="subunit">
    <text evidence="2">Part of the 30S ribosomal subunit. Contacts proteins S8 and S17. May interact with IF1 in the 30S initiation complex.</text>
</comment>
<comment type="similarity">
    <text evidence="2">Belongs to the universal ribosomal protein uS12 family.</text>
</comment>